<dbReference type="EC" id="2.1.1.199" evidence="1"/>
<dbReference type="EMBL" id="CP000116">
    <property type="protein sequence ID" value="AAZ96064.1"/>
    <property type="molecule type" value="Genomic_DNA"/>
</dbReference>
<dbReference type="RefSeq" id="WP_011310624.1">
    <property type="nucleotide sequence ID" value="NC_007404.1"/>
</dbReference>
<dbReference type="SMR" id="Q3SMI1"/>
<dbReference type="STRING" id="292415.Tbd_0111"/>
<dbReference type="KEGG" id="tbd:Tbd_0111"/>
<dbReference type="eggNOG" id="COG0275">
    <property type="taxonomic scope" value="Bacteria"/>
</dbReference>
<dbReference type="HOGENOM" id="CLU_038422_2_0_4"/>
<dbReference type="OrthoDB" id="9806637at2"/>
<dbReference type="Proteomes" id="UP000008291">
    <property type="component" value="Chromosome"/>
</dbReference>
<dbReference type="GO" id="GO:0005737">
    <property type="term" value="C:cytoplasm"/>
    <property type="evidence" value="ECO:0007669"/>
    <property type="project" value="UniProtKB-SubCell"/>
</dbReference>
<dbReference type="GO" id="GO:0071424">
    <property type="term" value="F:rRNA (cytosine-N4-)-methyltransferase activity"/>
    <property type="evidence" value="ECO:0007669"/>
    <property type="project" value="UniProtKB-UniRule"/>
</dbReference>
<dbReference type="GO" id="GO:0070475">
    <property type="term" value="P:rRNA base methylation"/>
    <property type="evidence" value="ECO:0007669"/>
    <property type="project" value="UniProtKB-UniRule"/>
</dbReference>
<dbReference type="Gene3D" id="1.10.150.170">
    <property type="entry name" value="Putative methyltransferase TM0872, insert domain"/>
    <property type="match status" value="1"/>
</dbReference>
<dbReference type="Gene3D" id="3.40.50.150">
    <property type="entry name" value="Vaccinia Virus protein VP39"/>
    <property type="match status" value="1"/>
</dbReference>
<dbReference type="HAMAP" id="MF_01007">
    <property type="entry name" value="16SrRNA_methyltr_H"/>
    <property type="match status" value="1"/>
</dbReference>
<dbReference type="InterPro" id="IPR002903">
    <property type="entry name" value="RsmH"/>
</dbReference>
<dbReference type="InterPro" id="IPR023397">
    <property type="entry name" value="SAM-dep_MeTrfase_MraW_recog"/>
</dbReference>
<dbReference type="InterPro" id="IPR029063">
    <property type="entry name" value="SAM-dependent_MTases_sf"/>
</dbReference>
<dbReference type="NCBIfam" id="TIGR00006">
    <property type="entry name" value="16S rRNA (cytosine(1402)-N(4))-methyltransferase RsmH"/>
    <property type="match status" value="1"/>
</dbReference>
<dbReference type="PANTHER" id="PTHR11265:SF0">
    <property type="entry name" value="12S RRNA N4-METHYLCYTIDINE METHYLTRANSFERASE"/>
    <property type="match status" value="1"/>
</dbReference>
<dbReference type="PANTHER" id="PTHR11265">
    <property type="entry name" value="S-ADENOSYL-METHYLTRANSFERASE MRAW"/>
    <property type="match status" value="1"/>
</dbReference>
<dbReference type="Pfam" id="PF01795">
    <property type="entry name" value="Methyltransf_5"/>
    <property type="match status" value="1"/>
</dbReference>
<dbReference type="PIRSF" id="PIRSF004486">
    <property type="entry name" value="MraW"/>
    <property type="match status" value="1"/>
</dbReference>
<dbReference type="SUPFAM" id="SSF81799">
    <property type="entry name" value="Putative methyltransferase TM0872, insert domain"/>
    <property type="match status" value="1"/>
</dbReference>
<dbReference type="SUPFAM" id="SSF53335">
    <property type="entry name" value="S-adenosyl-L-methionine-dependent methyltransferases"/>
    <property type="match status" value="1"/>
</dbReference>
<keyword id="KW-0963">Cytoplasm</keyword>
<keyword id="KW-0489">Methyltransferase</keyword>
<keyword id="KW-1185">Reference proteome</keyword>
<keyword id="KW-0698">rRNA processing</keyword>
<keyword id="KW-0949">S-adenosyl-L-methionine</keyword>
<keyword id="KW-0808">Transferase</keyword>
<organism>
    <name type="scientific">Thiobacillus denitrificans (strain ATCC 25259 / T1)</name>
    <dbReference type="NCBI Taxonomy" id="292415"/>
    <lineage>
        <taxon>Bacteria</taxon>
        <taxon>Pseudomonadati</taxon>
        <taxon>Pseudomonadota</taxon>
        <taxon>Betaproteobacteria</taxon>
        <taxon>Nitrosomonadales</taxon>
        <taxon>Thiobacillaceae</taxon>
        <taxon>Thiobacillus</taxon>
    </lineage>
</organism>
<accession>Q3SMI1</accession>
<proteinExistence type="inferred from homology"/>
<protein>
    <recommendedName>
        <fullName evidence="1">Ribosomal RNA small subunit methyltransferase H</fullName>
        <ecNumber evidence="1">2.1.1.199</ecNumber>
    </recommendedName>
    <alternativeName>
        <fullName evidence="1">16S rRNA m(4)C1402 methyltransferase</fullName>
    </alternativeName>
    <alternativeName>
        <fullName evidence="1">rRNA (cytosine-N(4)-)-methyltransferase RsmH</fullName>
    </alternativeName>
</protein>
<feature type="chain" id="PRO_0000223571" description="Ribosomal RNA small subunit methyltransferase H">
    <location>
        <begin position="1"/>
        <end position="311"/>
    </location>
</feature>
<feature type="binding site" evidence="1">
    <location>
        <begin position="33"/>
        <end position="35"/>
    </location>
    <ligand>
        <name>S-adenosyl-L-methionine</name>
        <dbReference type="ChEBI" id="CHEBI:59789"/>
    </ligand>
</feature>
<feature type="binding site" evidence="1">
    <location>
        <position position="53"/>
    </location>
    <ligand>
        <name>S-adenosyl-L-methionine</name>
        <dbReference type="ChEBI" id="CHEBI:59789"/>
    </ligand>
</feature>
<feature type="binding site" evidence="1">
    <location>
        <position position="77"/>
    </location>
    <ligand>
        <name>S-adenosyl-L-methionine</name>
        <dbReference type="ChEBI" id="CHEBI:59789"/>
    </ligand>
</feature>
<feature type="binding site" evidence="1">
    <location>
        <position position="98"/>
    </location>
    <ligand>
        <name>S-adenosyl-L-methionine</name>
        <dbReference type="ChEBI" id="CHEBI:59789"/>
    </ligand>
</feature>
<feature type="binding site" evidence="1">
    <location>
        <position position="105"/>
    </location>
    <ligand>
        <name>S-adenosyl-L-methionine</name>
        <dbReference type="ChEBI" id="CHEBI:59789"/>
    </ligand>
</feature>
<comment type="function">
    <text evidence="1">Specifically methylates the N4 position of cytidine in position 1402 (C1402) of 16S rRNA.</text>
</comment>
<comment type="catalytic activity">
    <reaction evidence="1">
        <text>cytidine(1402) in 16S rRNA + S-adenosyl-L-methionine = N(4)-methylcytidine(1402) in 16S rRNA + S-adenosyl-L-homocysteine + H(+)</text>
        <dbReference type="Rhea" id="RHEA:42928"/>
        <dbReference type="Rhea" id="RHEA-COMP:10286"/>
        <dbReference type="Rhea" id="RHEA-COMP:10287"/>
        <dbReference type="ChEBI" id="CHEBI:15378"/>
        <dbReference type="ChEBI" id="CHEBI:57856"/>
        <dbReference type="ChEBI" id="CHEBI:59789"/>
        <dbReference type="ChEBI" id="CHEBI:74506"/>
        <dbReference type="ChEBI" id="CHEBI:82748"/>
        <dbReference type="EC" id="2.1.1.199"/>
    </reaction>
</comment>
<comment type="subcellular location">
    <subcellularLocation>
        <location evidence="1">Cytoplasm</location>
    </subcellularLocation>
</comment>
<comment type="similarity">
    <text evidence="1">Belongs to the methyltransferase superfamily. RsmH family.</text>
</comment>
<gene>
    <name evidence="1" type="primary">rsmH</name>
    <name type="synonym">mraW</name>
    <name type="ordered locus">Tbd_0111</name>
</gene>
<evidence type="ECO:0000255" key="1">
    <source>
        <dbReference type="HAMAP-Rule" id="MF_01007"/>
    </source>
</evidence>
<reference key="1">
    <citation type="journal article" date="2006" name="J. Bacteriol.">
        <title>The genome sequence of the obligately chemolithoautotrophic, facultatively anaerobic bacterium Thiobacillus denitrificans.</title>
        <authorList>
            <person name="Beller H.R."/>
            <person name="Chain P.S."/>
            <person name="Letain T.E."/>
            <person name="Chakicherla A."/>
            <person name="Larimer F.W."/>
            <person name="Richardson P.M."/>
            <person name="Coleman M.A."/>
            <person name="Wood A.P."/>
            <person name="Kelly D.P."/>
        </authorList>
    </citation>
    <scope>NUCLEOTIDE SEQUENCE [LARGE SCALE GENOMIC DNA]</scope>
    <source>
        <strain>ATCC 25259 / T1</strain>
    </source>
</reference>
<sequence>MEPAHVPVLAQEAVAALAIKPEGVYVDATFGRGGHSRMILARLGTLGRLVALDRDPAAIAAGAALDDPRLTLRQSEFSRLGKVLDALGIARVDGILLDIGVSSPQLDDAARGFSFRFDAPLDMRMDPGSGISAADWLATAEEEEISEVIRTYGEERFAKPIARALVAARQKEAITSTAQLAGIIAAAVKKREPGQHPATRSFQAIRIYLNRELEELKAVLPQCVERLRAGGRLAVISFHSLEDRIVKRFLRTESLGEQAPPRLPIPAAMLKAGRLRLVGRAQHASDAEVAANPRARSAVLRVAERVAEAGA</sequence>
<name>RSMH_THIDA</name>